<protein>
    <recommendedName>
        <fullName evidence="1">Small ribosomal subunit protein uS3</fullName>
    </recommendedName>
    <alternativeName>
        <fullName evidence="2">30S ribosomal protein S3</fullName>
    </alternativeName>
</protein>
<sequence>MGQKVNPVGFRLWTHGSHGSVWYSKSCDYAKTVAEDYFVTKYVESSFAHIGISKVIIKRKGASCDITLHCMKPGLIIGKKGADLESFRLKLNKKFGFVPSLNVVEVKKPNSSAVLVAKSIAFQLEKRSSFRRVIKKAIATVMRESDVKGVKVACSGRLSGAEIARTEVFKEGSIPLHTMRADIDYWVAEAHTTYGVIGVKVWIYRGNIFRV</sequence>
<keyword id="KW-0687">Ribonucleoprotein</keyword>
<keyword id="KW-0689">Ribosomal protein</keyword>
<keyword id="KW-0694">RNA-binding</keyword>
<keyword id="KW-0699">rRNA-binding</keyword>
<feature type="chain" id="PRO_0000293839" description="Small ribosomal subunit protein uS3">
    <location>
        <begin position="1"/>
        <end position="211"/>
    </location>
</feature>
<feature type="domain" description="KH type-2" evidence="1">
    <location>
        <begin position="39"/>
        <end position="107"/>
    </location>
</feature>
<evidence type="ECO:0000255" key="1">
    <source>
        <dbReference type="HAMAP-Rule" id="MF_01309"/>
    </source>
</evidence>
<evidence type="ECO:0000305" key="2"/>
<proteinExistence type="inferred from homology"/>
<organism>
    <name type="scientific">Neorickettsia sennetsu (strain ATCC VR-367 / Miyayama)</name>
    <name type="common">Ehrlichia sennetsu</name>
    <dbReference type="NCBI Taxonomy" id="222891"/>
    <lineage>
        <taxon>Bacteria</taxon>
        <taxon>Pseudomonadati</taxon>
        <taxon>Pseudomonadota</taxon>
        <taxon>Alphaproteobacteria</taxon>
        <taxon>Rickettsiales</taxon>
        <taxon>Anaplasmataceae</taxon>
        <taxon>Neorickettsia</taxon>
    </lineage>
</organism>
<gene>
    <name evidence="1" type="primary">rpsC</name>
    <name type="ordered locus">NSE_0272</name>
</gene>
<name>RS3_NEOSM</name>
<reference key="1">
    <citation type="journal article" date="2006" name="PLoS Genet.">
        <title>Comparative genomics of emerging human ehrlichiosis agents.</title>
        <authorList>
            <person name="Dunning Hotopp J.C."/>
            <person name="Lin M."/>
            <person name="Madupu R."/>
            <person name="Crabtree J."/>
            <person name="Angiuoli S.V."/>
            <person name="Eisen J.A."/>
            <person name="Seshadri R."/>
            <person name="Ren Q."/>
            <person name="Wu M."/>
            <person name="Utterback T.R."/>
            <person name="Smith S."/>
            <person name="Lewis M."/>
            <person name="Khouri H."/>
            <person name="Zhang C."/>
            <person name="Niu H."/>
            <person name="Lin Q."/>
            <person name="Ohashi N."/>
            <person name="Zhi N."/>
            <person name="Nelson W.C."/>
            <person name="Brinkac L.M."/>
            <person name="Dodson R.J."/>
            <person name="Rosovitz M.J."/>
            <person name="Sundaram J.P."/>
            <person name="Daugherty S.C."/>
            <person name="Davidsen T."/>
            <person name="Durkin A.S."/>
            <person name="Gwinn M.L."/>
            <person name="Haft D.H."/>
            <person name="Selengut J.D."/>
            <person name="Sullivan S.A."/>
            <person name="Zafar N."/>
            <person name="Zhou L."/>
            <person name="Benahmed F."/>
            <person name="Forberger H."/>
            <person name="Halpin R."/>
            <person name="Mulligan S."/>
            <person name="Robinson J."/>
            <person name="White O."/>
            <person name="Rikihisa Y."/>
            <person name="Tettelin H."/>
        </authorList>
    </citation>
    <scope>NUCLEOTIDE SEQUENCE [LARGE SCALE GENOMIC DNA]</scope>
    <source>
        <strain>ATCC VR-367 / Miyayama</strain>
    </source>
</reference>
<comment type="function">
    <text evidence="1">Binds the lower part of the 30S subunit head. Binds mRNA in the 70S ribosome, positioning it for translation.</text>
</comment>
<comment type="subunit">
    <text evidence="1">Part of the 30S ribosomal subunit. Forms a tight complex with proteins S10 and S14.</text>
</comment>
<comment type="similarity">
    <text evidence="1">Belongs to the universal ribosomal protein uS3 family.</text>
</comment>
<dbReference type="EMBL" id="CP000237">
    <property type="protein sequence ID" value="ABD45993.1"/>
    <property type="molecule type" value="Genomic_DNA"/>
</dbReference>
<dbReference type="RefSeq" id="WP_011451669.1">
    <property type="nucleotide sequence ID" value="NC_007798.1"/>
</dbReference>
<dbReference type="SMR" id="Q2GED3"/>
<dbReference type="STRING" id="222891.NSE_0272"/>
<dbReference type="KEGG" id="nse:NSE_0272"/>
<dbReference type="eggNOG" id="COG0092">
    <property type="taxonomic scope" value="Bacteria"/>
</dbReference>
<dbReference type="HOGENOM" id="CLU_058591_0_2_5"/>
<dbReference type="OrthoDB" id="9806396at2"/>
<dbReference type="Proteomes" id="UP000001942">
    <property type="component" value="Chromosome"/>
</dbReference>
<dbReference type="GO" id="GO:0022627">
    <property type="term" value="C:cytosolic small ribosomal subunit"/>
    <property type="evidence" value="ECO:0007669"/>
    <property type="project" value="TreeGrafter"/>
</dbReference>
<dbReference type="GO" id="GO:0003729">
    <property type="term" value="F:mRNA binding"/>
    <property type="evidence" value="ECO:0007669"/>
    <property type="project" value="UniProtKB-UniRule"/>
</dbReference>
<dbReference type="GO" id="GO:0019843">
    <property type="term" value="F:rRNA binding"/>
    <property type="evidence" value="ECO:0007669"/>
    <property type="project" value="UniProtKB-UniRule"/>
</dbReference>
<dbReference type="GO" id="GO:0003735">
    <property type="term" value="F:structural constituent of ribosome"/>
    <property type="evidence" value="ECO:0007669"/>
    <property type="project" value="InterPro"/>
</dbReference>
<dbReference type="GO" id="GO:0006412">
    <property type="term" value="P:translation"/>
    <property type="evidence" value="ECO:0007669"/>
    <property type="project" value="UniProtKB-UniRule"/>
</dbReference>
<dbReference type="CDD" id="cd02412">
    <property type="entry name" value="KH-II_30S_S3"/>
    <property type="match status" value="1"/>
</dbReference>
<dbReference type="FunFam" id="3.30.300.20:FF:000001">
    <property type="entry name" value="30S ribosomal protein S3"/>
    <property type="match status" value="1"/>
</dbReference>
<dbReference type="Gene3D" id="3.30.300.20">
    <property type="match status" value="1"/>
</dbReference>
<dbReference type="Gene3D" id="3.30.1140.32">
    <property type="entry name" value="Ribosomal protein S3, C-terminal domain"/>
    <property type="match status" value="1"/>
</dbReference>
<dbReference type="HAMAP" id="MF_01309_B">
    <property type="entry name" value="Ribosomal_uS3_B"/>
    <property type="match status" value="1"/>
</dbReference>
<dbReference type="InterPro" id="IPR004087">
    <property type="entry name" value="KH_dom"/>
</dbReference>
<dbReference type="InterPro" id="IPR015946">
    <property type="entry name" value="KH_dom-like_a/b"/>
</dbReference>
<dbReference type="InterPro" id="IPR004044">
    <property type="entry name" value="KH_dom_type_2"/>
</dbReference>
<dbReference type="InterPro" id="IPR009019">
    <property type="entry name" value="KH_sf_prok-type"/>
</dbReference>
<dbReference type="InterPro" id="IPR036419">
    <property type="entry name" value="Ribosomal_S3_C_sf"/>
</dbReference>
<dbReference type="InterPro" id="IPR005704">
    <property type="entry name" value="Ribosomal_uS3_bac-typ"/>
</dbReference>
<dbReference type="InterPro" id="IPR001351">
    <property type="entry name" value="Ribosomal_uS3_C"/>
</dbReference>
<dbReference type="NCBIfam" id="TIGR01009">
    <property type="entry name" value="rpsC_bact"/>
    <property type="match status" value="1"/>
</dbReference>
<dbReference type="PANTHER" id="PTHR11760">
    <property type="entry name" value="30S/40S RIBOSOMAL PROTEIN S3"/>
    <property type="match status" value="1"/>
</dbReference>
<dbReference type="PANTHER" id="PTHR11760:SF19">
    <property type="entry name" value="SMALL RIBOSOMAL SUBUNIT PROTEIN US3C"/>
    <property type="match status" value="1"/>
</dbReference>
<dbReference type="Pfam" id="PF07650">
    <property type="entry name" value="KH_2"/>
    <property type="match status" value="1"/>
</dbReference>
<dbReference type="Pfam" id="PF00189">
    <property type="entry name" value="Ribosomal_S3_C"/>
    <property type="match status" value="1"/>
</dbReference>
<dbReference type="SMART" id="SM00322">
    <property type="entry name" value="KH"/>
    <property type="match status" value="1"/>
</dbReference>
<dbReference type="SUPFAM" id="SSF54814">
    <property type="entry name" value="Prokaryotic type KH domain (KH-domain type II)"/>
    <property type="match status" value="1"/>
</dbReference>
<dbReference type="SUPFAM" id="SSF54821">
    <property type="entry name" value="Ribosomal protein S3 C-terminal domain"/>
    <property type="match status" value="1"/>
</dbReference>
<dbReference type="PROSITE" id="PS50823">
    <property type="entry name" value="KH_TYPE_2"/>
    <property type="match status" value="1"/>
</dbReference>
<accession>Q2GED3</accession>